<comment type="function">
    <text evidence="1">Effects nucleoid occlusion by binding relatively nonspecifically to DNA and preventing the assembly of the division machinery in the vicinity of the nucleoid, especially under conditions that disturb the cell cycle. It helps to coordinate cell division and chromosome segregation by preventing the formation of the Z ring through the nucleoid, which would cause chromosome breakage.</text>
</comment>
<comment type="subcellular location">
    <subcellularLocation>
        <location evidence="1">Cytoplasm</location>
        <location evidence="1">Nucleoid</location>
    </subcellularLocation>
</comment>
<comment type="similarity">
    <text evidence="1">Belongs to the ParB family.</text>
</comment>
<organism>
    <name type="scientific">Halalkalibacterium halodurans (strain ATCC BAA-125 / DSM 18197 / FERM 7344 / JCM 9153 / C-125)</name>
    <name type="common">Bacillus halodurans</name>
    <dbReference type="NCBI Taxonomy" id="272558"/>
    <lineage>
        <taxon>Bacteria</taxon>
        <taxon>Bacillati</taxon>
        <taxon>Bacillota</taxon>
        <taxon>Bacilli</taxon>
        <taxon>Bacillales</taxon>
        <taxon>Bacillaceae</taxon>
        <taxon>Halalkalibacterium (ex Joshi et al. 2022)</taxon>
    </lineage>
</organism>
<feature type="chain" id="PRO_0000346623" description="Nucleoid occlusion protein">
    <location>
        <begin position="1"/>
        <end position="283"/>
    </location>
</feature>
<feature type="DNA-binding region" description="H-T-H motif" evidence="1">
    <location>
        <begin position="143"/>
        <end position="162"/>
    </location>
</feature>
<feature type="region of interest" description="Disordered" evidence="2">
    <location>
        <begin position="1"/>
        <end position="26"/>
    </location>
</feature>
<feature type="compositionally biased region" description="Basic and acidic residues" evidence="2">
    <location>
        <begin position="13"/>
        <end position="26"/>
    </location>
</feature>
<accession>Q9K5M9</accession>
<gene>
    <name evidence="1" type="primary">noc</name>
    <name type="ordered locus">BH4059</name>
</gene>
<proteinExistence type="inferred from homology"/>
<protein>
    <recommendedName>
        <fullName evidence="1">Nucleoid occlusion protein</fullName>
        <shortName evidence="1">Noc</shortName>
    </recommendedName>
</protein>
<name>NOC_HALH5</name>
<keyword id="KW-0131">Cell cycle</keyword>
<keyword id="KW-0132">Cell division</keyword>
<keyword id="KW-0963">Cytoplasm</keyword>
<keyword id="KW-0238">DNA-binding</keyword>
<keyword id="KW-1185">Reference proteome</keyword>
<keyword id="KW-0717">Septation</keyword>
<reference key="1">
    <citation type="journal article" date="2000" name="Nucleic Acids Res.">
        <title>Complete genome sequence of the alkaliphilic bacterium Bacillus halodurans and genomic sequence comparison with Bacillus subtilis.</title>
        <authorList>
            <person name="Takami H."/>
            <person name="Nakasone K."/>
            <person name="Takaki Y."/>
            <person name="Maeno G."/>
            <person name="Sasaki R."/>
            <person name="Masui N."/>
            <person name="Fuji F."/>
            <person name="Hirama C."/>
            <person name="Nakamura Y."/>
            <person name="Ogasawara N."/>
            <person name="Kuhara S."/>
            <person name="Horikoshi K."/>
        </authorList>
    </citation>
    <scope>NUCLEOTIDE SEQUENCE [LARGE SCALE GENOMIC DNA]</scope>
    <source>
        <strain>ATCC BAA-125 / DSM 18197 / FERM 7344 / JCM 9153 / C-125</strain>
    </source>
</reference>
<sequence length="283" mass="32673">MKQPFSRLFGFGDKQDQEMETGKQEEVHQLPIKEIVPNRFQPRTIFDDERIEELAQTIRTHGIIQPIVVRQREGKYEIIAGERRFRAVTLLGWETIPAIIKEFNDSQTASVALIENLQREGLTAVEEAVAYQKLIELHGLTQESLAQRLGKGQSTIANKLRLLHLSEPVQQAIMERKISERHARALLSLKDDALETKLLEEIVEQHLNVKQTEERVKELLEDAPASKPKKKPTRKAYSKDMRIAMNTIRQSVDMVMKSGLKVDTAEEEHEDFYQFTIRIPKKK</sequence>
<dbReference type="EMBL" id="BA000004">
    <property type="protein sequence ID" value="BAB07778.1"/>
    <property type="molecule type" value="Genomic_DNA"/>
</dbReference>
<dbReference type="PIR" id="C84157">
    <property type="entry name" value="C84157"/>
</dbReference>
<dbReference type="RefSeq" id="WP_010900183.1">
    <property type="nucleotide sequence ID" value="NC_002570.2"/>
</dbReference>
<dbReference type="SMR" id="Q9K5M9"/>
<dbReference type="STRING" id="272558.gene:10729977"/>
<dbReference type="GeneID" id="87599642"/>
<dbReference type="KEGG" id="bha:BH4059"/>
<dbReference type="eggNOG" id="COG1475">
    <property type="taxonomic scope" value="Bacteria"/>
</dbReference>
<dbReference type="HOGENOM" id="CLU_023853_0_1_9"/>
<dbReference type="OrthoDB" id="9802051at2"/>
<dbReference type="Proteomes" id="UP000001258">
    <property type="component" value="Chromosome"/>
</dbReference>
<dbReference type="GO" id="GO:0005694">
    <property type="term" value="C:chromosome"/>
    <property type="evidence" value="ECO:0007669"/>
    <property type="project" value="TreeGrafter"/>
</dbReference>
<dbReference type="GO" id="GO:0005737">
    <property type="term" value="C:cytoplasm"/>
    <property type="evidence" value="ECO:0007669"/>
    <property type="project" value="UniProtKB-UniRule"/>
</dbReference>
<dbReference type="GO" id="GO:0009295">
    <property type="term" value="C:nucleoid"/>
    <property type="evidence" value="ECO:0007669"/>
    <property type="project" value="UniProtKB-SubCell"/>
</dbReference>
<dbReference type="GO" id="GO:0003677">
    <property type="term" value="F:DNA binding"/>
    <property type="evidence" value="ECO:0007669"/>
    <property type="project" value="UniProtKB-UniRule"/>
</dbReference>
<dbReference type="GO" id="GO:0007059">
    <property type="term" value="P:chromosome segregation"/>
    <property type="evidence" value="ECO:0007669"/>
    <property type="project" value="TreeGrafter"/>
</dbReference>
<dbReference type="GO" id="GO:0000917">
    <property type="term" value="P:division septum assembly"/>
    <property type="evidence" value="ECO:0007669"/>
    <property type="project" value="UniProtKB-KW"/>
</dbReference>
<dbReference type="GO" id="GO:0045881">
    <property type="term" value="P:positive regulation of sporulation resulting in formation of a cellular spore"/>
    <property type="evidence" value="ECO:0007669"/>
    <property type="project" value="TreeGrafter"/>
</dbReference>
<dbReference type="CDD" id="cd16393">
    <property type="entry name" value="SPO0J_N"/>
    <property type="match status" value="1"/>
</dbReference>
<dbReference type="FunFam" id="1.10.10.2830:FF:000001">
    <property type="entry name" value="Chromosome partitioning protein ParB"/>
    <property type="match status" value="1"/>
</dbReference>
<dbReference type="FunFam" id="3.90.1530.30:FF:000001">
    <property type="entry name" value="Chromosome partitioning protein ParB"/>
    <property type="match status" value="1"/>
</dbReference>
<dbReference type="Gene3D" id="1.10.10.2830">
    <property type="match status" value="1"/>
</dbReference>
<dbReference type="Gene3D" id="3.90.1530.30">
    <property type="match status" value="1"/>
</dbReference>
<dbReference type="HAMAP" id="MF_02015">
    <property type="entry name" value="ParB_Noc"/>
    <property type="match status" value="1"/>
</dbReference>
<dbReference type="InterPro" id="IPR050336">
    <property type="entry name" value="Chromosome_partition/occlusion"/>
</dbReference>
<dbReference type="InterPro" id="IPR041468">
    <property type="entry name" value="HTH_ParB/Spo0J"/>
</dbReference>
<dbReference type="InterPro" id="IPR023705">
    <property type="entry name" value="Nucleoid_occlusion_protein"/>
</dbReference>
<dbReference type="InterPro" id="IPR004437">
    <property type="entry name" value="ParB/RepB/Spo0J"/>
</dbReference>
<dbReference type="InterPro" id="IPR003115">
    <property type="entry name" value="ParB/Sulfiredoxin_dom"/>
</dbReference>
<dbReference type="InterPro" id="IPR036086">
    <property type="entry name" value="ParB/Sulfiredoxin_sf"/>
</dbReference>
<dbReference type="NCBIfam" id="TIGR04285">
    <property type="entry name" value="nucleoid_noc"/>
    <property type="match status" value="1"/>
</dbReference>
<dbReference type="NCBIfam" id="TIGR00180">
    <property type="entry name" value="parB_part"/>
    <property type="match status" value="1"/>
</dbReference>
<dbReference type="PANTHER" id="PTHR33375">
    <property type="entry name" value="CHROMOSOME-PARTITIONING PROTEIN PARB-RELATED"/>
    <property type="match status" value="1"/>
</dbReference>
<dbReference type="PANTHER" id="PTHR33375:SF8">
    <property type="entry name" value="NUCLEOID OCCLUSION PROTEIN"/>
    <property type="match status" value="1"/>
</dbReference>
<dbReference type="Pfam" id="PF17762">
    <property type="entry name" value="HTH_ParB"/>
    <property type="match status" value="1"/>
</dbReference>
<dbReference type="Pfam" id="PF02195">
    <property type="entry name" value="ParBc"/>
    <property type="match status" value="1"/>
</dbReference>
<dbReference type="SMART" id="SM00470">
    <property type="entry name" value="ParB"/>
    <property type="match status" value="1"/>
</dbReference>
<dbReference type="SUPFAM" id="SSF110849">
    <property type="entry name" value="ParB/Sulfiredoxin"/>
    <property type="match status" value="1"/>
</dbReference>
<evidence type="ECO:0000255" key="1">
    <source>
        <dbReference type="HAMAP-Rule" id="MF_02015"/>
    </source>
</evidence>
<evidence type="ECO:0000256" key="2">
    <source>
        <dbReference type="SAM" id="MobiDB-lite"/>
    </source>
</evidence>